<dbReference type="EMBL" id="CP000961">
    <property type="protein sequence ID" value="ACA84342.1"/>
    <property type="molecule type" value="Genomic_DNA"/>
</dbReference>
<dbReference type="RefSeq" id="WP_012322691.1">
    <property type="nucleotide sequence ID" value="NC_010506.1"/>
</dbReference>
<dbReference type="SMR" id="B1KCW7"/>
<dbReference type="STRING" id="392500.Swoo_0041"/>
<dbReference type="KEGG" id="swd:Swoo_0041"/>
<dbReference type="eggNOG" id="COG2922">
    <property type="taxonomic scope" value="Bacteria"/>
</dbReference>
<dbReference type="HOGENOM" id="CLU_133242_0_0_6"/>
<dbReference type="Proteomes" id="UP000002168">
    <property type="component" value="Chromosome"/>
</dbReference>
<dbReference type="HAMAP" id="MF_00598">
    <property type="entry name" value="Smg"/>
    <property type="match status" value="1"/>
</dbReference>
<dbReference type="InterPro" id="IPR007456">
    <property type="entry name" value="Smg"/>
</dbReference>
<dbReference type="NCBIfam" id="NF002897">
    <property type="entry name" value="PRK03430.1"/>
    <property type="match status" value="1"/>
</dbReference>
<dbReference type="PANTHER" id="PTHR38692">
    <property type="entry name" value="PROTEIN SMG"/>
    <property type="match status" value="1"/>
</dbReference>
<dbReference type="PANTHER" id="PTHR38692:SF1">
    <property type="entry name" value="PROTEIN SMG"/>
    <property type="match status" value="1"/>
</dbReference>
<dbReference type="Pfam" id="PF04361">
    <property type="entry name" value="DUF494"/>
    <property type="match status" value="1"/>
</dbReference>
<feature type="chain" id="PRO_1000129906" description="Protein Smg homolog">
    <location>
        <begin position="1"/>
        <end position="157"/>
    </location>
</feature>
<gene>
    <name evidence="1" type="primary">smg</name>
    <name type="ordered locus">Swoo_0041</name>
</gene>
<evidence type="ECO:0000255" key="1">
    <source>
        <dbReference type="HAMAP-Rule" id="MF_00598"/>
    </source>
</evidence>
<reference key="1">
    <citation type="submission" date="2008-02" db="EMBL/GenBank/DDBJ databases">
        <title>Complete sequence of Shewanella woodyi ATCC 51908.</title>
        <authorList>
            <consortium name="US DOE Joint Genome Institute"/>
            <person name="Copeland A."/>
            <person name="Lucas S."/>
            <person name="Lapidus A."/>
            <person name="Glavina del Rio T."/>
            <person name="Dalin E."/>
            <person name="Tice H."/>
            <person name="Bruce D."/>
            <person name="Goodwin L."/>
            <person name="Pitluck S."/>
            <person name="Sims D."/>
            <person name="Brettin T."/>
            <person name="Detter J.C."/>
            <person name="Han C."/>
            <person name="Kuske C.R."/>
            <person name="Schmutz J."/>
            <person name="Larimer F."/>
            <person name="Land M."/>
            <person name="Hauser L."/>
            <person name="Kyrpides N."/>
            <person name="Lykidis A."/>
            <person name="Zhao J.-S."/>
            <person name="Richardson P."/>
        </authorList>
    </citation>
    <scope>NUCLEOTIDE SEQUENCE [LARGE SCALE GENOMIC DNA]</scope>
    <source>
        <strain>ATCC 51908 / MS32</strain>
    </source>
</reference>
<accession>B1KCW7</accession>
<protein>
    <recommendedName>
        <fullName evidence="1">Protein Smg homolog</fullName>
    </recommendedName>
</protein>
<proteinExistence type="inferred from homology"/>
<name>SMG_SHEWM</name>
<organism>
    <name type="scientific">Shewanella woodyi (strain ATCC 51908 / MS32)</name>
    <dbReference type="NCBI Taxonomy" id="392500"/>
    <lineage>
        <taxon>Bacteria</taxon>
        <taxon>Pseudomonadati</taxon>
        <taxon>Pseudomonadota</taxon>
        <taxon>Gammaproteobacteria</taxon>
        <taxon>Alteromonadales</taxon>
        <taxon>Shewanellaceae</taxon>
        <taxon>Shewanella</taxon>
    </lineage>
</organism>
<comment type="similarity">
    <text evidence="1">Belongs to the Smg family.</text>
</comment>
<keyword id="KW-1185">Reference proteome</keyword>
<sequence>MFDILMYLFENYVHSEVEFLVDEDELTQELTRAGFHQSEIIKALSWLENLAELQEGDKPYLCNHAQHSFRIYTQDEMDKLDVECRGFILFLEQIEVLNVVTREMVIDRIMELDESALILEDLKWVVLMVLFNAPGNESAYEQMEDLIFEQPDGRLHS</sequence>